<feature type="chain" id="PRO_0000109847" description="Aprataxin">
    <location>
        <begin position="1"/>
        <end position="347"/>
    </location>
</feature>
<feature type="domain" description="FHA-like">
    <location>
        <begin position="23"/>
        <end position="72"/>
    </location>
</feature>
<feature type="domain" description="HIT" evidence="4">
    <location>
        <begin position="173"/>
        <end position="278"/>
    </location>
</feature>
<feature type="zinc finger region" description="C2H2-type">
    <location>
        <begin position="322"/>
        <end position="344"/>
    </location>
</feature>
<feature type="region of interest" description="Disordered" evidence="5">
    <location>
        <begin position="107"/>
        <end position="176"/>
    </location>
</feature>
<feature type="region of interest" description="Interaction with DNA substrate" evidence="3">
    <location>
        <begin position="198"/>
        <end position="202"/>
    </location>
</feature>
<feature type="region of interest" description="Interaction with DNA substrate" evidence="3">
    <location>
        <begin position="260"/>
        <end position="261"/>
    </location>
</feature>
<feature type="short sequence motif" description="Histidine triad motif">
    <location>
        <begin position="263"/>
        <end position="267"/>
    </location>
</feature>
<feature type="compositionally biased region" description="Basic and acidic residues" evidence="5">
    <location>
        <begin position="108"/>
        <end position="122"/>
    </location>
</feature>
<feature type="compositionally biased region" description="Polar residues" evidence="5">
    <location>
        <begin position="123"/>
        <end position="133"/>
    </location>
</feature>
<feature type="compositionally biased region" description="Low complexity" evidence="5">
    <location>
        <begin position="142"/>
        <end position="156"/>
    </location>
</feature>
<feature type="active site" description="Tele-AMP-histidine intermediate" evidence="3">
    <location>
        <position position="265"/>
    </location>
</feature>
<feature type="site" description="Interaction with DNA substrate" evidence="3">
    <location>
        <position position="179"/>
    </location>
</feature>
<feature type="site" description="Interaction with DNA substrate" evidence="3">
    <location>
        <position position="256"/>
    </location>
</feature>
<feature type="site" description="Interaction with DNA substrate" evidence="3">
    <location>
        <position position="267"/>
    </location>
</feature>
<feature type="site" description="Interaction with DNA substrate" evidence="3">
    <location>
        <position position="282"/>
    </location>
</feature>
<gene>
    <name type="primary">aptx</name>
    <name type="ORF">TEgg082k23.1</name>
</gene>
<organism>
    <name type="scientific">Xenopus tropicalis</name>
    <name type="common">Western clawed frog</name>
    <name type="synonym">Silurana tropicalis</name>
    <dbReference type="NCBI Taxonomy" id="8364"/>
    <lineage>
        <taxon>Eukaryota</taxon>
        <taxon>Metazoa</taxon>
        <taxon>Chordata</taxon>
        <taxon>Craniata</taxon>
        <taxon>Vertebrata</taxon>
        <taxon>Euteleostomi</taxon>
        <taxon>Amphibia</taxon>
        <taxon>Batrachia</taxon>
        <taxon>Anura</taxon>
        <taxon>Pipoidea</taxon>
        <taxon>Pipidae</taxon>
        <taxon>Xenopodinae</taxon>
        <taxon>Xenopus</taxon>
        <taxon>Silurana</taxon>
    </lineage>
</organism>
<protein>
    <recommendedName>
        <fullName>Aprataxin</fullName>
        <ecNumber evidence="3">3.6.1.71</ecNumber>
        <ecNumber evidence="2">3.6.1.72</ecNumber>
    </recommendedName>
    <alternativeName>
        <fullName>Forkhead-associated domain histidine triad-like protein</fullName>
        <shortName>FHA-HIT</shortName>
    </alternativeName>
</protein>
<dbReference type="EC" id="3.6.1.71" evidence="3"/>
<dbReference type="EC" id="3.6.1.72" evidence="2"/>
<dbReference type="EMBL" id="AY219904">
    <property type="protein sequence ID" value="AAP45148.1"/>
    <property type="molecule type" value="mRNA"/>
</dbReference>
<dbReference type="EMBL" id="CR848478">
    <property type="protein sequence ID" value="CAJ81775.1"/>
    <property type="molecule type" value="mRNA"/>
</dbReference>
<dbReference type="RefSeq" id="NP_991394.1">
    <property type="nucleotide sequence ID" value="NM_205825.2"/>
</dbReference>
<dbReference type="RefSeq" id="XP_012814173.1">
    <property type="nucleotide sequence ID" value="XM_012958719.3"/>
</dbReference>
<dbReference type="SMR" id="P61801"/>
<dbReference type="FunCoup" id="P61801">
    <property type="interactions" value="2808"/>
</dbReference>
<dbReference type="STRING" id="8364.ENSXETP00000038402"/>
<dbReference type="PaxDb" id="8364-ENSXETP00000052107"/>
<dbReference type="GeneID" id="403092"/>
<dbReference type="KEGG" id="xtr:403092"/>
<dbReference type="AGR" id="Xenbase:XB-GENE-1015068"/>
<dbReference type="CTD" id="54840"/>
<dbReference type="Xenbase" id="XB-GENE-1015068">
    <property type="gene designation" value="aptx"/>
</dbReference>
<dbReference type="eggNOG" id="KOG0562">
    <property type="taxonomic scope" value="Eukaryota"/>
</dbReference>
<dbReference type="HOGENOM" id="CLU_066882_2_0_1"/>
<dbReference type="InParanoid" id="P61801"/>
<dbReference type="OMA" id="QFRTGYH"/>
<dbReference type="OrthoDB" id="3512845at2759"/>
<dbReference type="PhylomeDB" id="P61801"/>
<dbReference type="TreeFam" id="TF313308"/>
<dbReference type="Proteomes" id="UP000008143">
    <property type="component" value="Chromosome 1"/>
</dbReference>
<dbReference type="Bgee" id="ENSXETG00000024143">
    <property type="expression patterns" value="Expressed in egg cell and 13 other cell types or tissues"/>
</dbReference>
<dbReference type="GO" id="GO:0005730">
    <property type="term" value="C:nucleolus"/>
    <property type="evidence" value="ECO:0007669"/>
    <property type="project" value="UniProtKB-SubCell"/>
</dbReference>
<dbReference type="GO" id="GO:0005654">
    <property type="term" value="C:nucleoplasm"/>
    <property type="evidence" value="ECO:0007669"/>
    <property type="project" value="UniProtKB-SubCell"/>
</dbReference>
<dbReference type="GO" id="GO:0033699">
    <property type="term" value="F:DNA 5'-adenosine monophosphate hydrolase activity"/>
    <property type="evidence" value="ECO:0007669"/>
    <property type="project" value="UniProtKB-EC"/>
</dbReference>
<dbReference type="GO" id="GO:0003677">
    <property type="term" value="F:DNA binding"/>
    <property type="evidence" value="ECO:0007669"/>
    <property type="project" value="UniProtKB-KW"/>
</dbReference>
<dbReference type="GO" id="GO:0120108">
    <property type="term" value="F:DNA-3'-diphospho-5'-guanosine diphosphatase"/>
    <property type="evidence" value="ECO:0007669"/>
    <property type="project" value="UniProtKB-EC"/>
</dbReference>
<dbReference type="GO" id="GO:0008270">
    <property type="term" value="F:zinc ion binding"/>
    <property type="evidence" value="ECO:0007669"/>
    <property type="project" value="UniProtKB-KW"/>
</dbReference>
<dbReference type="GO" id="GO:0006281">
    <property type="term" value="P:DNA repair"/>
    <property type="evidence" value="ECO:0007669"/>
    <property type="project" value="UniProtKB-KW"/>
</dbReference>
<dbReference type="CDD" id="cd01278">
    <property type="entry name" value="aprataxin_related"/>
    <property type="match status" value="1"/>
</dbReference>
<dbReference type="CDD" id="cd22735">
    <property type="entry name" value="FHA_APTX"/>
    <property type="match status" value="1"/>
</dbReference>
<dbReference type="FunFam" id="2.60.200.20:FF:000010">
    <property type="entry name" value="aprataxin isoform X1"/>
    <property type="match status" value="1"/>
</dbReference>
<dbReference type="FunFam" id="3.30.428.10:FF:000004">
    <property type="entry name" value="aprataxin isoform X2"/>
    <property type="match status" value="1"/>
</dbReference>
<dbReference type="Gene3D" id="2.60.200.20">
    <property type="match status" value="1"/>
</dbReference>
<dbReference type="Gene3D" id="3.30.428.10">
    <property type="entry name" value="HIT-like"/>
    <property type="match status" value="1"/>
</dbReference>
<dbReference type="InterPro" id="IPR041388">
    <property type="entry name" value="FHA_2"/>
</dbReference>
<dbReference type="InterPro" id="IPR047289">
    <property type="entry name" value="FHA_APTX"/>
</dbReference>
<dbReference type="InterPro" id="IPR019808">
    <property type="entry name" value="Histidine_triad_CS"/>
</dbReference>
<dbReference type="InterPro" id="IPR011146">
    <property type="entry name" value="HIT-like"/>
</dbReference>
<dbReference type="InterPro" id="IPR036265">
    <property type="entry name" value="HIT-like_sf"/>
</dbReference>
<dbReference type="InterPro" id="IPR008984">
    <property type="entry name" value="SMAD_FHA_dom_sf"/>
</dbReference>
<dbReference type="InterPro" id="IPR032566">
    <property type="entry name" value="Znf-C2HE"/>
</dbReference>
<dbReference type="PANTHER" id="PTHR12486:SF4">
    <property type="entry name" value="APRATAXIN"/>
    <property type="match status" value="1"/>
</dbReference>
<dbReference type="PANTHER" id="PTHR12486">
    <property type="entry name" value="APRATAXIN-RELATED"/>
    <property type="match status" value="1"/>
</dbReference>
<dbReference type="Pfam" id="PF11969">
    <property type="entry name" value="DcpS_C"/>
    <property type="match status" value="1"/>
</dbReference>
<dbReference type="Pfam" id="PF17913">
    <property type="entry name" value="FHA_2"/>
    <property type="match status" value="1"/>
</dbReference>
<dbReference type="Pfam" id="PF16278">
    <property type="entry name" value="zf-C2HE"/>
    <property type="match status" value="1"/>
</dbReference>
<dbReference type="SUPFAM" id="SSF54197">
    <property type="entry name" value="HIT-like"/>
    <property type="match status" value="1"/>
</dbReference>
<dbReference type="SUPFAM" id="SSF49879">
    <property type="entry name" value="SMAD/FHA domain"/>
    <property type="match status" value="1"/>
</dbReference>
<dbReference type="PROSITE" id="PS00892">
    <property type="entry name" value="HIT_1"/>
    <property type="match status" value="1"/>
</dbReference>
<dbReference type="PROSITE" id="PS51084">
    <property type="entry name" value="HIT_2"/>
    <property type="match status" value="1"/>
</dbReference>
<evidence type="ECO:0000250" key="1"/>
<evidence type="ECO:0000250" key="2">
    <source>
        <dbReference type="UniProtKB" id="O74859"/>
    </source>
</evidence>
<evidence type="ECO:0000250" key="3">
    <source>
        <dbReference type="UniProtKB" id="Q7Z2E3"/>
    </source>
</evidence>
<evidence type="ECO:0000255" key="4">
    <source>
        <dbReference type="PROSITE-ProRule" id="PRU00464"/>
    </source>
</evidence>
<evidence type="ECO:0000256" key="5">
    <source>
        <dbReference type="SAM" id="MobiDB-lite"/>
    </source>
</evidence>
<comment type="function">
    <text evidence="2 3">DNA-binding protein involved in single-strand DNA break repair, double-strand DNA break repair and base excision repair. Resolves abortive DNA ligation intermediates formed either at base excision sites, or when DNA ligases attempt to repair non-ligatable breaks induced by reactive oxygen species. Catalyzes the release of adenylate groups covalently linked to 5'-phosphate termini, resulting in the production of 5'-phosphate termini that can be efficiently rejoined. Also able to hydrolyze adenosine 5'-monophosphoramidate (AMP-NH(2)) and diadenosine tetraphosphate (AppppA), but with lower catalytic activity (By similarity). Likewise, catalyzes the release of 3'-linked guanosine (DNAppG) and inosine (DNAppI) from DNA, but has higher specific activity with 5'-linked adenosine (AppDNA) (By similarity).</text>
</comment>
<comment type="catalytic activity">
    <reaction evidence="3">
        <text>a 5'-end adenosine-5'-diphospho-5'-2'-deoxyribonucleoside-DNA + H2O = a 5'-end 5'-phospho-2'-deoxyribonucleoside-DNA + AMP + 2 H(+)</text>
        <dbReference type="Rhea" id="RHEA:52128"/>
        <dbReference type="Rhea" id="RHEA-COMP:13180"/>
        <dbReference type="Rhea" id="RHEA-COMP:13181"/>
        <dbReference type="ChEBI" id="CHEBI:15377"/>
        <dbReference type="ChEBI" id="CHEBI:15378"/>
        <dbReference type="ChEBI" id="CHEBI:136412"/>
        <dbReference type="ChEBI" id="CHEBI:136413"/>
        <dbReference type="ChEBI" id="CHEBI:456215"/>
        <dbReference type="EC" id="3.6.1.71"/>
    </reaction>
</comment>
<comment type="catalytic activity">
    <reaction evidence="3">
        <text>a 5'-end adenosine-5'-diphospho-5'-ribonucleoside-2'-deoxyribonucleotide-DNA + H2O = a 5'-end 5'-phospho-ribonucleoside-2'-deoxyribonucleotide-DNA + AMP + 2 H(+)</text>
        <dbReference type="Rhea" id="RHEA:52132"/>
        <dbReference type="Rhea" id="RHEA-COMP:13182"/>
        <dbReference type="Rhea" id="RHEA-COMP:13183"/>
        <dbReference type="ChEBI" id="CHEBI:15377"/>
        <dbReference type="ChEBI" id="CHEBI:15378"/>
        <dbReference type="ChEBI" id="CHEBI:136414"/>
        <dbReference type="ChEBI" id="CHEBI:136415"/>
        <dbReference type="ChEBI" id="CHEBI:456215"/>
        <dbReference type="EC" id="3.6.1.71"/>
    </reaction>
</comment>
<comment type="catalytic activity">
    <reaction evidence="2">
        <text>a 3'-end 2'-deoxyribonucleotide-3'-diphospho-5'-guanosine-DNA + H2O = a 3'-end 2'-deoxyribonucleotide 3'-phosphate-DNA + GMP + 2 H(+)</text>
        <dbReference type="Rhea" id="RHEA:52140"/>
        <dbReference type="Rhea" id="RHEA-COMP:13186"/>
        <dbReference type="Rhea" id="RHEA-COMP:13187"/>
        <dbReference type="ChEBI" id="CHEBI:15377"/>
        <dbReference type="ChEBI" id="CHEBI:15378"/>
        <dbReference type="ChEBI" id="CHEBI:58115"/>
        <dbReference type="ChEBI" id="CHEBI:136419"/>
        <dbReference type="ChEBI" id="CHEBI:136420"/>
        <dbReference type="EC" id="3.6.1.72"/>
    </reaction>
</comment>
<comment type="subcellular location">
    <subcellularLocation>
        <location evidence="3">Nucleus</location>
        <location evidence="3">Nucleoplasm</location>
    </subcellularLocation>
    <subcellularLocation>
        <location evidence="3">Nucleus</location>
        <location evidence="3">Nucleolus</location>
    </subcellularLocation>
</comment>
<comment type="domain">
    <text evidence="3">The histidine triad, also called HIT motif, forms part of the binding loop for the alpha-phosphate of purine mononucleotide.</text>
</comment>
<comment type="domain">
    <text evidence="1">The HIT domain is required for enzymatic activity.</text>
</comment>
<comment type="domain">
    <text evidence="1">The C2H2-type zinc finger mediates DNA-binding.</text>
</comment>
<name>APTX_XENTR</name>
<sequence>MIECWLVSKDGKHGRIRLPHAETVVIGRGPETQITDKKCSRHQVQLMADCNKGYVKVKQLGTNPTSIDGVDIGKEQKVDLKPGHTLHIVNNLYPYVIEFLEGATNPHAKRENENRSSSKRTQENSLNEGTGTSMKLMKKESNISPSSSSGKNSSCSTEEKYNAQEVKSQGHWSQGLKASMQDPTMQVFKDDKVVVIKDKYPKARYHWLVLPWQSIANLKVLRAEHLELVQHMHAVGQKIAKEHSDSKCAPFQLGYHAIPSMSHVHLHVISQDFDSPCLKNKKHWNSFTTDYFLESQAMIEMIKTHGKVNVKDGVSELLKTPLMCHICRKEQANMPQLKEHLKKHWPT</sequence>
<accession>P61801</accession>
<accession>Q28E30</accession>
<keyword id="KW-0227">DNA damage</keyword>
<keyword id="KW-0234">DNA repair</keyword>
<keyword id="KW-0238">DNA-binding</keyword>
<keyword id="KW-0378">Hydrolase</keyword>
<keyword id="KW-0479">Metal-binding</keyword>
<keyword id="KW-0539">Nucleus</keyword>
<keyword id="KW-1185">Reference proteome</keyword>
<keyword id="KW-0862">Zinc</keyword>
<keyword id="KW-0863">Zinc-finger</keyword>
<proteinExistence type="evidence at transcript level"/>
<reference key="1">
    <citation type="submission" date="2003-01" db="EMBL/GenBank/DDBJ databases">
        <title>Cloning and sequence analysis of FHA-HIT in western clawed frog.</title>
        <authorList>
            <person name="Huang C.-H."/>
        </authorList>
    </citation>
    <scope>NUCLEOTIDE SEQUENCE [MRNA]</scope>
</reference>
<reference key="2">
    <citation type="submission" date="2006-03" db="EMBL/GenBank/DDBJ databases">
        <authorList>
            <consortium name="Sanger Xenopus tropicalis EST/cDNA project"/>
        </authorList>
    </citation>
    <scope>NUCLEOTIDE SEQUENCE [LARGE SCALE MRNA]</scope>
    <source>
        <tissue>Egg</tissue>
    </source>
</reference>